<name>OPSD_DICLA</name>
<keyword id="KW-0966">Cell projection</keyword>
<keyword id="KW-0157">Chromophore</keyword>
<keyword id="KW-1015">Disulfide bond</keyword>
<keyword id="KW-0297">G-protein coupled receptor</keyword>
<keyword id="KW-0325">Glycoprotein</keyword>
<keyword id="KW-0449">Lipoprotein</keyword>
<keyword id="KW-0472">Membrane</keyword>
<keyword id="KW-0564">Palmitate</keyword>
<keyword id="KW-0597">Phosphoprotein</keyword>
<keyword id="KW-0600">Photoreceptor protein</keyword>
<keyword id="KW-0675">Receptor</keyword>
<keyword id="KW-1185">Reference proteome</keyword>
<keyword id="KW-0681">Retinal protein</keyword>
<keyword id="KW-0716">Sensory transduction</keyword>
<keyword id="KW-0807">Transducer</keyword>
<keyword id="KW-0812">Transmembrane</keyword>
<keyword id="KW-1133">Transmembrane helix</keyword>
<keyword id="KW-0844">Vision</keyword>
<sequence length="353" mass="39411">MNGTEGPFFYVPMVNTTGIVRSPYDYPQYYLVSPAAYAALGAYMFLLILLGFPINFLTLYVTIEHKKLRTPLNYILLNLAVADLFMVFGGFTTTMYTSMHGYFVLGRLGCNMEGFFATLGGEIGLWSLVVLAVERWLVVCKPISNFRFGENHAIMGLAFTWVMACSCAVPPLVGWSRYIPEGMQCSCGVDYYTRAEGFNNESFVIYMFACHFIIPMCVVFFCYGRLLCAVKEAAAAQQESETTQRAEKEVTRMVVIMGIAFLICWCPYASVAWYIFTHQGSEFGPVFMTLPAFFAKTSSVYNPLIYILMNKQFRHCMITTLCCGKNPFEEEEGASTASKTEASSVSSSSVSPA</sequence>
<accession>Q9YGZ4</accession>
<organism>
    <name type="scientific">Dicentrarchus labrax</name>
    <name type="common">European seabass</name>
    <name type="synonym">Morone labrax</name>
    <dbReference type="NCBI Taxonomy" id="13489"/>
    <lineage>
        <taxon>Eukaryota</taxon>
        <taxon>Metazoa</taxon>
        <taxon>Chordata</taxon>
        <taxon>Craniata</taxon>
        <taxon>Vertebrata</taxon>
        <taxon>Euteleostomi</taxon>
        <taxon>Actinopterygii</taxon>
        <taxon>Neopterygii</taxon>
        <taxon>Teleostei</taxon>
        <taxon>Neoteleostei</taxon>
        <taxon>Acanthomorphata</taxon>
        <taxon>Eupercaria</taxon>
        <taxon>Moronidae</taxon>
        <taxon>Dicentrarchus</taxon>
    </lineage>
</organism>
<feature type="chain" id="PRO_0000197670" description="Rhodopsin">
    <location>
        <begin position="1"/>
        <end position="353"/>
    </location>
</feature>
<feature type="topological domain" description="Extracellular" evidence="9">
    <location>
        <begin position="1"/>
        <end position="36"/>
    </location>
</feature>
<feature type="transmembrane region" description="Helical; Name=1" evidence="1">
    <location>
        <begin position="37"/>
        <end position="61"/>
    </location>
</feature>
<feature type="topological domain" description="Cytoplasmic" evidence="9">
    <location>
        <begin position="62"/>
        <end position="73"/>
    </location>
</feature>
<feature type="transmembrane region" description="Helical; Name=2" evidence="1">
    <location>
        <begin position="74"/>
        <end position="96"/>
    </location>
</feature>
<feature type="topological domain" description="Extracellular" evidence="9">
    <location>
        <begin position="97"/>
        <end position="110"/>
    </location>
</feature>
<feature type="transmembrane region" description="Helical; Name=3" evidence="1">
    <location>
        <begin position="111"/>
        <end position="133"/>
    </location>
</feature>
<feature type="topological domain" description="Cytoplasmic" evidence="9">
    <location>
        <begin position="134"/>
        <end position="152"/>
    </location>
</feature>
<feature type="transmembrane region" description="Helical; Name=4" evidence="1">
    <location>
        <begin position="153"/>
        <end position="173"/>
    </location>
</feature>
<feature type="topological domain" description="Extracellular" evidence="9">
    <location>
        <begin position="174"/>
        <end position="202"/>
    </location>
</feature>
<feature type="transmembrane region" description="Helical; Name=5" evidence="1">
    <location>
        <begin position="203"/>
        <end position="224"/>
    </location>
</feature>
<feature type="topological domain" description="Cytoplasmic" evidence="9">
    <location>
        <begin position="225"/>
        <end position="252"/>
    </location>
</feature>
<feature type="transmembrane region" description="Helical; Name=6" evidence="1">
    <location>
        <begin position="253"/>
        <end position="274"/>
    </location>
</feature>
<feature type="topological domain" description="Extracellular" evidence="9">
    <location>
        <begin position="275"/>
        <end position="286"/>
    </location>
</feature>
<feature type="transmembrane region" description="Helical; Name=7" evidence="1">
    <location>
        <begin position="287"/>
        <end position="308"/>
    </location>
</feature>
<feature type="topological domain" description="Cytoplasmic" evidence="9">
    <location>
        <begin position="309"/>
        <end position="353"/>
    </location>
</feature>
<feature type="region of interest" description="Disordered" evidence="7">
    <location>
        <begin position="331"/>
        <end position="353"/>
    </location>
</feature>
<feature type="short sequence motif" description="'Ionic lock' involved in activated form stabilization" evidence="1">
    <location>
        <begin position="134"/>
        <end position="136"/>
    </location>
</feature>
<feature type="compositionally biased region" description="Low complexity" evidence="7">
    <location>
        <begin position="334"/>
        <end position="353"/>
    </location>
</feature>
<feature type="site" description="Plays an important role in the conformation switch to the active conformation" evidence="1">
    <location>
        <position position="113"/>
    </location>
</feature>
<feature type="modified residue" description="N6-(retinylidene)lysine" evidence="1">
    <location>
        <position position="296"/>
    </location>
</feature>
<feature type="lipid moiety-binding region" description="S-palmitoyl cysteine" evidence="1">
    <location>
        <position position="322"/>
    </location>
</feature>
<feature type="lipid moiety-binding region" description="S-palmitoyl cysteine" evidence="1">
    <location>
        <position position="323"/>
    </location>
</feature>
<feature type="glycosylation site" description="N-linked (GlcNAc...) asparagine" evidence="5">
    <location>
        <position position="2"/>
    </location>
</feature>
<feature type="glycosylation site" description="N-linked (GlcNAc...) asparagine" evidence="5">
    <location>
        <position position="15"/>
    </location>
</feature>
<feature type="glycosylation site" description="N-linked (GlcNAc...) asparagine" evidence="5">
    <location>
        <position position="200"/>
    </location>
</feature>
<feature type="disulfide bond" evidence="6">
    <location>
        <begin position="110"/>
        <end position="187"/>
    </location>
</feature>
<comment type="function">
    <text evidence="1 2 3 8">Photoreceptor required for image-forming vision at low light intensity. While most salt water fish species use retinal as chromophore, most freshwater fish use 3-dehydroretinal, or a mixture of retinal and 3-dehydroretinal (PubMed:18422881). Light-induced isomerization of 11-cis to all-trans retinal triggers a conformational change that activates signaling via G-proteins. Subsequent receptor phosphorylation mediates displacement of the bound G-protein alpha subunit by arrestin and terminates signaling (By similarity).</text>
</comment>
<comment type="subcellular location">
    <subcellularLocation>
        <location evidence="2">Membrane</location>
        <topology evidence="2">Multi-pass membrane protein</topology>
    </subcellularLocation>
    <subcellularLocation>
        <location evidence="4">Cell projection</location>
        <location evidence="4">Cilium</location>
        <location evidence="4">Photoreceptor outer segment</location>
    </subcellularLocation>
    <text evidence="2">Synthesized in the inner segment (IS) of rod photoreceptor cells before vectorial transport to disk membranes in the rod outer segment (OS) photosensory cilia.</text>
</comment>
<comment type="PTM">
    <text evidence="1">Phosphorylated on some or all of the serine and threonine residues present in the C-terminal region.</text>
</comment>
<comment type="PTM">
    <text evidence="1">Contains one covalently linked retinal chromophore.</text>
</comment>
<comment type="similarity">
    <text evidence="6">Belongs to the G-protein coupled receptor 1 family. Opsin subfamily.</text>
</comment>
<protein>
    <recommendedName>
        <fullName>Rhodopsin</fullName>
    </recommendedName>
</protein>
<reference key="1">
    <citation type="submission" date="1999-01" db="EMBL/GenBank/DDBJ databases">
        <title>Comparative analysis of opsins in Mediterranian coastal fish.</title>
        <authorList>
            <person name="Archer S.N."/>
            <person name="Hirano J."/>
        </authorList>
    </citation>
    <scope>NUCLEOTIDE SEQUENCE [MRNA]</scope>
    <source>
        <tissue>Retina</tissue>
    </source>
</reference>
<reference key="2">
    <citation type="journal article" date="2008" name="Photochem. Photobiol.">
        <title>Presence of rhodopsin and porphyropsin in the eyes of 164 fishes, representing marine, diadromous, coastal and freshwater species--a qualitative and comparative study.</title>
        <authorList>
            <person name="Toyama M."/>
            <person name="Hironaka M."/>
            <person name="Yamahama Y."/>
            <person name="Horiguchi H."/>
            <person name="Tsukada O."/>
            <person name="Uto N."/>
            <person name="Ueno Y."/>
            <person name="Tokunaga F."/>
            <person name="Seno K."/>
            <person name="Hariyama T."/>
        </authorList>
    </citation>
    <scope>RETINAL-BINDING</scope>
    <scope>FUNCTION</scope>
</reference>
<proteinExistence type="evidence at protein level"/>
<evidence type="ECO:0000250" key="1">
    <source>
        <dbReference type="UniProtKB" id="P02699"/>
    </source>
</evidence>
<evidence type="ECO:0000250" key="2">
    <source>
        <dbReference type="UniProtKB" id="P08100"/>
    </source>
</evidence>
<evidence type="ECO:0000250" key="3">
    <source>
        <dbReference type="UniProtKB" id="P32309"/>
    </source>
</evidence>
<evidence type="ECO:0000250" key="4">
    <source>
        <dbReference type="UniProtKB" id="P35359"/>
    </source>
</evidence>
<evidence type="ECO:0000255" key="5"/>
<evidence type="ECO:0000255" key="6">
    <source>
        <dbReference type="PROSITE-ProRule" id="PRU00521"/>
    </source>
</evidence>
<evidence type="ECO:0000256" key="7">
    <source>
        <dbReference type="SAM" id="MobiDB-lite"/>
    </source>
</evidence>
<evidence type="ECO:0000269" key="8">
    <source>
    </source>
</evidence>
<evidence type="ECO:0000305" key="9"/>
<dbReference type="EMBL" id="Y18673">
    <property type="protein sequence ID" value="CAA77255.1"/>
    <property type="molecule type" value="mRNA"/>
</dbReference>
<dbReference type="SMR" id="Q9YGZ4"/>
<dbReference type="GlyCosmos" id="Q9YGZ4">
    <property type="glycosylation" value="3 sites, No reported glycans"/>
</dbReference>
<dbReference type="Ensembl" id="ENSDLAT00005026034.2">
    <property type="protein sequence ID" value="ENSDLAP00005024357.1"/>
    <property type="gene ID" value="ENSDLAG00005011122.2"/>
</dbReference>
<dbReference type="GeneTree" id="ENSGT01030000234549"/>
<dbReference type="OMA" id="EFGPLFM"/>
<dbReference type="OrthoDB" id="5962323at2759"/>
<dbReference type="Proteomes" id="UP000694389">
    <property type="component" value="Unassembled WGS sequence"/>
</dbReference>
<dbReference type="GO" id="GO:0016020">
    <property type="term" value="C:membrane"/>
    <property type="evidence" value="ECO:0000250"/>
    <property type="project" value="UniProtKB"/>
</dbReference>
<dbReference type="GO" id="GO:0097381">
    <property type="term" value="C:photoreceptor disc membrane"/>
    <property type="evidence" value="ECO:0000250"/>
    <property type="project" value="UniProtKB"/>
</dbReference>
<dbReference type="GO" id="GO:0005886">
    <property type="term" value="C:plasma membrane"/>
    <property type="evidence" value="ECO:0000250"/>
    <property type="project" value="UniProtKB"/>
</dbReference>
<dbReference type="GO" id="GO:0005502">
    <property type="term" value="F:11-cis retinal binding"/>
    <property type="evidence" value="ECO:0000250"/>
    <property type="project" value="UniProtKB"/>
</dbReference>
<dbReference type="GO" id="GO:0008020">
    <property type="term" value="F:G protein-coupled photoreceptor activity"/>
    <property type="evidence" value="ECO:0000250"/>
    <property type="project" value="UniProtKB"/>
</dbReference>
<dbReference type="GO" id="GO:0016038">
    <property type="term" value="P:absorption of visible light"/>
    <property type="evidence" value="ECO:0000250"/>
    <property type="project" value="UniProtKB"/>
</dbReference>
<dbReference type="GO" id="GO:0016056">
    <property type="term" value="P:G protein-coupled opsin signaling pathway"/>
    <property type="evidence" value="ECO:0000250"/>
    <property type="project" value="UniProtKB"/>
</dbReference>
<dbReference type="GO" id="GO:0007601">
    <property type="term" value="P:visual perception"/>
    <property type="evidence" value="ECO:0007669"/>
    <property type="project" value="UniProtKB-KW"/>
</dbReference>
<dbReference type="CDD" id="cd15080">
    <property type="entry name" value="7tmA_MWS_opsin"/>
    <property type="match status" value="1"/>
</dbReference>
<dbReference type="FunFam" id="1.20.1070.10:FF:000018">
    <property type="entry name" value="Rhodopsin"/>
    <property type="match status" value="1"/>
</dbReference>
<dbReference type="Gene3D" id="1.20.1070.10">
    <property type="entry name" value="Rhodopsin 7-helix transmembrane proteins"/>
    <property type="match status" value="1"/>
</dbReference>
<dbReference type="InterPro" id="IPR050125">
    <property type="entry name" value="GPCR_opsins"/>
</dbReference>
<dbReference type="InterPro" id="IPR000276">
    <property type="entry name" value="GPCR_Rhodpsn"/>
</dbReference>
<dbReference type="InterPro" id="IPR017452">
    <property type="entry name" value="GPCR_Rhodpsn_7TM"/>
</dbReference>
<dbReference type="InterPro" id="IPR001760">
    <property type="entry name" value="Opsin"/>
</dbReference>
<dbReference type="InterPro" id="IPR027430">
    <property type="entry name" value="Retinal_BS"/>
</dbReference>
<dbReference type="InterPro" id="IPR000732">
    <property type="entry name" value="Rhodopsin"/>
</dbReference>
<dbReference type="InterPro" id="IPR019477">
    <property type="entry name" value="Rhodopsin_N"/>
</dbReference>
<dbReference type="PANTHER" id="PTHR24240">
    <property type="entry name" value="OPSIN"/>
    <property type="match status" value="1"/>
</dbReference>
<dbReference type="Pfam" id="PF00001">
    <property type="entry name" value="7tm_1"/>
    <property type="match status" value="1"/>
</dbReference>
<dbReference type="Pfam" id="PF10413">
    <property type="entry name" value="Rhodopsin_N"/>
    <property type="match status" value="1"/>
</dbReference>
<dbReference type="PRINTS" id="PR00237">
    <property type="entry name" value="GPCRRHODOPSN"/>
</dbReference>
<dbReference type="PRINTS" id="PR00238">
    <property type="entry name" value="OPSIN"/>
</dbReference>
<dbReference type="PRINTS" id="PR00579">
    <property type="entry name" value="RHODOPSIN"/>
</dbReference>
<dbReference type="SUPFAM" id="SSF81321">
    <property type="entry name" value="Family A G protein-coupled receptor-like"/>
    <property type="match status" value="1"/>
</dbReference>
<dbReference type="PROSITE" id="PS00237">
    <property type="entry name" value="G_PROTEIN_RECEP_F1_1"/>
    <property type="match status" value="1"/>
</dbReference>
<dbReference type="PROSITE" id="PS50262">
    <property type="entry name" value="G_PROTEIN_RECEP_F1_2"/>
    <property type="match status" value="1"/>
</dbReference>
<dbReference type="PROSITE" id="PS00238">
    <property type="entry name" value="OPSIN"/>
    <property type="match status" value="1"/>
</dbReference>
<gene>
    <name type="primary">rho</name>
</gene>